<protein>
    <recommendedName>
        <fullName>KAT8 regulatory NSL complex subunit 1-like protein</fullName>
    </recommendedName>
</protein>
<keyword id="KW-1185">Reference proteome</keyword>
<name>KAL1L_XENTR</name>
<proteinExistence type="evidence at transcript level"/>
<accession>Q0IHW6</accession>
<feature type="chain" id="PRO_0000319584" description="KAT8 regulatory NSL complex subunit 1-like protein">
    <location>
        <begin position="1"/>
        <end position="903"/>
    </location>
</feature>
<feature type="domain" description="PEHE" evidence="1">
    <location>
        <begin position="748"/>
        <end position="862"/>
    </location>
</feature>
<feature type="region of interest" description="Disordered" evidence="2">
    <location>
        <begin position="319"/>
        <end position="343"/>
    </location>
</feature>
<feature type="region of interest" description="Disordered" evidence="2">
    <location>
        <begin position="419"/>
        <end position="441"/>
    </location>
</feature>
<feature type="region of interest" description="Disordered" evidence="2">
    <location>
        <begin position="652"/>
        <end position="676"/>
    </location>
</feature>
<feature type="compositionally biased region" description="Polar residues" evidence="2">
    <location>
        <begin position="423"/>
        <end position="441"/>
    </location>
</feature>
<feature type="compositionally biased region" description="Polar residues" evidence="2">
    <location>
        <begin position="652"/>
        <end position="661"/>
    </location>
</feature>
<gene>
    <name type="primary">kansl1l</name>
</gene>
<dbReference type="EMBL" id="BC122934">
    <property type="protein sequence ID" value="AAI22935.1"/>
    <property type="molecule type" value="mRNA"/>
</dbReference>
<dbReference type="RefSeq" id="NP_001072578.1">
    <property type="nucleotide sequence ID" value="NM_001079110.1"/>
</dbReference>
<dbReference type="RefSeq" id="XP_012826009.1">
    <property type="nucleotide sequence ID" value="XM_012970555.3"/>
</dbReference>
<dbReference type="RefSeq" id="XP_012826010.1">
    <property type="nucleotide sequence ID" value="XM_012970556.3"/>
</dbReference>
<dbReference type="RefSeq" id="XP_012826011.1">
    <property type="nucleotide sequence ID" value="XM_012970557.3"/>
</dbReference>
<dbReference type="SMR" id="Q0IHW6"/>
<dbReference type="FunCoup" id="Q0IHW6">
    <property type="interactions" value="154"/>
</dbReference>
<dbReference type="STRING" id="8364.ENSXETP00000039073"/>
<dbReference type="PaxDb" id="8364-ENSXETP00000002380"/>
<dbReference type="GeneID" id="780033"/>
<dbReference type="KEGG" id="xtr:780033"/>
<dbReference type="AGR" id="Xenbase:XB-GENE-6457137"/>
<dbReference type="CTD" id="151050"/>
<dbReference type="eggNOG" id="ENOG502QRI7">
    <property type="taxonomic scope" value="Eukaryota"/>
</dbReference>
<dbReference type="HOGENOM" id="CLU_011035_1_0_1"/>
<dbReference type="InParanoid" id="Q0IHW6"/>
<dbReference type="OMA" id="WRVVDIQ"/>
<dbReference type="OrthoDB" id="6022640at2759"/>
<dbReference type="TreeFam" id="TF336511"/>
<dbReference type="Proteomes" id="UP000008143">
    <property type="component" value="Chromosome 9"/>
</dbReference>
<dbReference type="Bgee" id="ENSXETG00000001088">
    <property type="expression patterns" value="Expressed in mesonephros and 13 other cell types or tissues"/>
</dbReference>
<dbReference type="ExpressionAtlas" id="Q0IHW6">
    <property type="expression patterns" value="baseline"/>
</dbReference>
<dbReference type="GO" id="GO:1902562">
    <property type="term" value="C:H4 histone acetyltransferase complex"/>
    <property type="evidence" value="ECO:0007669"/>
    <property type="project" value="UniProtKB-ARBA"/>
</dbReference>
<dbReference type="GO" id="GO:0043231">
    <property type="term" value="C:intracellular membrane-bounded organelle"/>
    <property type="evidence" value="ECO:0007669"/>
    <property type="project" value="UniProtKB-ARBA"/>
</dbReference>
<dbReference type="Gene3D" id="6.10.250.3170">
    <property type="match status" value="1"/>
</dbReference>
<dbReference type="InterPro" id="IPR026180">
    <property type="entry name" value="NSL1"/>
</dbReference>
<dbReference type="InterPro" id="IPR029332">
    <property type="entry name" value="PEHE_dom"/>
</dbReference>
<dbReference type="PANTHER" id="PTHR22443:SF16">
    <property type="entry name" value="KAT8 REGULATORY NSL COMPLEX SUBUNIT 1-LIKE PROTEIN"/>
    <property type="match status" value="1"/>
</dbReference>
<dbReference type="PANTHER" id="PTHR22443">
    <property type="entry name" value="NON-SPECIFIC LETHAL 1, ISOFORM M"/>
    <property type="match status" value="1"/>
</dbReference>
<dbReference type="Pfam" id="PF15275">
    <property type="entry name" value="PEHE"/>
    <property type="match status" value="1"/>
</dbReference>
<dbReference type="SMART" id="SM01300">
    <property type="entry name" value="PEHE"/>
    <property type="match status" value="1"/>
</dbReference>
<dbReference type="PROSITE" id="PS52052">
    <property type="entry name" value="PEHE"/>
    <property type="match status" value="1"/>
</dbReference>
<organism>
    <name type="scientific">Xenopus tropicalis</name>
    <name type="common">Western clawed frog</name>
    <name type="synonym">Silurana tropicalis</name>
    <dbReference type="NCBI Taxonomy" id="8364"/>
    <lineage>
        <taxon>Eukaryota</taxon>
        <taxon>Metazoa</taxon>
        <taxon>Chordata</taxon>
        <taxon>Craniata</taxon>
        <taxon>Vertebrata</taxon>
        <taxon>Euteleostomi</taxon>
        <taxon>Amphibia</taxon>
        <taxon>Batrachia</taxon>
        <taxon>Anura</taxon>
        <taxon>Pipoidea</taxon>
        <taxon>Pipidae</taxon>
        <taxon>Xenopodinae</taxon>
        <taxon>Xenopus</taxon>
        <taxon>Silurana</taxon>
    </lineage>
</organism>
<evidence type="ECO:0000255" key="1">
    <source>
        <dbReference type="PROSITE-ProRule" id="PRU01397"/>
    </source>
</evidence>
<evidence type="ECO:0000256" key="2">
    <source>
        <dbReference type="SAM" id="MobiDB-lite"/>
    </source>
</evidence>
<reference key="1">
    <citation type="submission" date="2006-09" db="EMBL/GenBank/DDBJ databases">
        <authorList>
            <consortium name="NIH - Xenopus Gene Collection (XGC) project"/>
        </authorList>
    </citation>
    <scope>NUCLEOTIDE SEQUENCE [LARGE SCALE MRNA]</scope>
    <source>
        <tissue>Testis</tissue>
    </source>
</reference>
<sequence length="903" mass="100635">MTPALTETVPQGPGAHLAPSFALQSLNSDTIICMDNSQAVEHISLPKANGPKVADKKQLLKTEFMNGNSIGSQTSGHYQTVFLLTSNTALSLPNKGSSTWKMENQDVCKQRFHITKGSPSLPNGMSYQPERKAKRELFPGCVSQLLADVHKLWDVSLTKTQGTEGICLPECMLNGHRGTESLAVSSCPSLISHVSANVPSVASVKAVGTNLLLKCLNHQQVLLNRARRNQKRLQSYLAQHAVQHFNQQIRAFVNHQIHDKPAGIFDSQPTKVINNNLNVGSSGISSATSDGLKNGVYHSVKRFSVSAKEILKQIKKDFDSDATGSSSDEDWDEKARQNSDECNAERSWLSVRTRIGSRWVWLQSQISELEYKIQHLTDLHSQIRKAKGTLKFEEPSKGNFKQKLWLPDSEMLLSLAERMPKSPQGTNPSPTNDLDMSPSSPTLLLRNIEKQSARLTEIVSSLTVPLLSPNDSAKSSVYKRVANGFSDRMHTDGFPSFNEFCEQQVKRRKKVRVKASSALGSNLCSSARTRPLQALKKRKLYKLSAEYSYVNKVNLFSSPVYQYEELPSNGNHCSTWKCSKVLHRPWLMAQNACEADSCFHPVLSFPYELPLNVHLAALPMKNHNIKGNSVDSIALRGELDKSQSYVSASWSTECTSSYSPDPQTPAHSWERRHRSESEADAALLESGLTTPVSTQKSSAQQLLAHESSSMVCAARRRLRSGNSYDINNIVIPMSLIAPTKLEKLKYKEIITPSWKEVVLEPLESPAHDMPEDLSDEAYISRHEKYELKEKARWSLWDHSKRPKRNRSSSYSFGTSPRTVLLSCECSCSPNSQAPSEALPSDTGGYRTLHFSHESPKGKTIHWERRVFPLTEEPAMELLGKCPSQAQVSTVDNQQCPKNDCDYT</sequence>